<reference key="1">
    <citation type="submission" date="2003-10" db="EMBL/GenBank/DDBJ databases">
        <authorList>
            <consortium name="NIH - Zebrafish Gene Collection (ZGC) project"/>
        </authorList>
    </citation>
    <scope>NUCLEOTIDE SEQUENCE [LARGE SCALE MRNA]</scope>
    <source>
        <tissue>Embryo</tissue>
    </source>
</reference>
<organism>
    <name type="scientific">Danio rerio</name>
    <name type="common">Zebrafish</name>
    <name type="synonym">Brachydanio rerio</name>
    <dbReference type="NCBI Taxonomy" id="7955"/>
    <lineage>
        <taxon>Eukaryota</taxon>
        <taxon>Metazoa</taxon>
        <taxon>Chordata</taxon>
        <taxon>Craniata</taxon>
        <taxon>Vertebrata</taxon>
        <taxon>Euteleostomi</taxon>
        <taxon>Actinopterygii</taxon>
        <taxon>Neopterygii</taxon>
        <taxon>Teleostei</taxon>
        <taxon>Ostariophysi</taxon>
        <taxon>Cypriniformes</taxon>
        <taxon>Danionidae</taxon>
        <taxon>Danioninae</taxon>
        <taxon>Danio</taxon>
    </lineage>
</organism>
<accession>Q6PCS6</accession>
<gene>
    <name type="primary">mtfp1</name>
    <name type="synonym">mtp18</name>
    <name type="ORF">zgc:63910</name>
</gene>
<dbReference type="EMBL" id="BC059182">
    <property type="protein sequence ID" value="AAH59182.1"/>
    <property type="molecule type" value="mRNA"/>
</dbReference>
<dbReference type="RefSeq" id="NP_956980.1">
    <property type="nucleotide sequence ID" value="NM_200686.1"/>
</dbReference>
<dbReference type="FunCoup" id="Q6PCS6">
    <property type="interactions" value="783"/>
</dbReference>
<dbReference type="STRING" id="7955.ENSDARP00000141096"/>
<dbReference type="GeneID" id="393659"/>
<dbReference type="KEGG" id="dre:393659"/>
<dbReference type="AGR" id="ZFIN:ZDB-GENE-040426-1293"/>
<dbReference type="CTD" id="51537"/>
<dbReference type="ZFIN" id="ZDB-GENE-040426-1293">
    <property type="gene designation" value="mtfp1"/>
</dbReference>
<dbReference type="InParanoid" id="Q6PCS6"/>
<dbReference type="OrthoDB" id="424969at2759"/>
<dbReference type="PhylomeDB" id="Q6PCS6"/>
<dbReference type="PRO" id="PR:Q6PCS6"/>
<dbReference type="Proteomes" id="UP000000437">
    <property type="component" value="Chromosome 5"/>
</dbReference>
<dbReference type="GO" id="GO:0005743">
    <property type="term" value="C:mitochondrial inner membrane"/>
    <property type="evidence" value="ECO:0000250"/>
    <property type="project" value="UniProtKB"/>
</dbReference>
<dbReference type="GO" id="GO:0005739">
    <property type="term" value="C:mitochondrion"/>
    <property type="evidence" value="ECO:0000318"/>
    <property type="project" value="GO_Central"/>
</dbReference>
<dbReference type="GO" id="GO:0006915">
    <property type="term" value="P:apoptotic process"/>
    <property type="evidence" value="ECO:0007669"/>
    <property type="project" value="UniProtKB-KW"/>
</dbReference>
<dbReference type="GO" id="GO:0000266">
    <property type="term" value="P:mitochondrial fission"/>
    <property type="evidence" value="ECO:0000250"/>
    <property type="project" value="UniProtKB"/>
</dbReference>
<dbReference type="InterPro" id="IPR019560">
    <property type="entry name" value="Mitochondrial_18_kDa_protein"/>
</dbReference>
<dbReference type="PANTHER" id="PTHR11001">
    <property type="entry name" value="MITOCHONDRIAL FISSION PROCESS PROTEIN 1"/>
    <property type="match status" value="1"/>
</dbReference>
<dbReference type="PANTHER" id="PTHR11001:SF2">
    <property type="entry name" value="MITOCHONDRIAL FISSION PROCESS PROTEIN 1"/>
    <property type="match status" value="1"/>
</dbReference>
<dbReference type="Pfam" id="PF10558">
    <property type="entry name" value="MTP18"/>
    <property type="match status" value="2"/>
</dbReference>
<name>MTFP1_DANRE</name>
<feature type="chain" id="PRO_0000212413" description="Mitochondrial fission process protein 1">
    <location>
        <begin position="1"/>
        <end position="165"/>
    </location>
</feature>
<feature type="transmembrane region" description="Helical" evidence="2">
    <location>
        <begin position="35"/>
        <end position="55"/>
    </location>
</feature>
<feature type="transmembrane region" description="Helical" evidence="2">
    <location>
        <begin position="76"/>
        <end position="96"/>
    </location>
</feature>
<feature type="transmembrane region" description="Helical" evidence="2">
    <location>
        <begin position="130"/>
        <end position="150"/>
    </location>
</feature>
<keyword id="KW-0053">Apoptosis</keyword>
<keyword id="KW-0472">Membrane</keyword>
<keyword id="KW-0496">Mitochondrion</keyword>
<keyword id="KW-0999">Mitochondrion inner membrane</keyword>
<keyword id="KW-1185">Reference proteome</keyword>
<keyword id="KW-0812">Transmembrane</keyword>
<keyword id="KW-1133">Transmembrane helix</keyword>
<protein>
    <recommendedName>
        <fullName>Mitochondrial fission process protein 1</fullName>
    </recommendedName>
    <alternativeName>
        <fullName>Mitochondrial 18 kDa protein</fullName>
        <shortName>MTP18</shortName>
    </alternativeName>
</protein>
<sequence>MEPSADTHSKPVDIYRDTWVRFLGYANEVGEAFRALVPVGAVWASYGVATTYVTADAIDKGRKAAAAHGERPGKAVCVCVAVVDTFVWQALASVAVPGFTINRVCAASHFLLSRTTRWPLPVRKWTTTAIGLSTIPFIITPIDRSVDLLLDSSLRKLYSEGEKED</sequence>
<evidence type="ECO:0000250" key="1"/>
<evidence type="ECO:0000255" key="2"/>
<evidence type="ECO:0000305" key="3"/>
<comment type="function">
    <text evidence="1">Involved in the mitochondrial division probably by regulating membrane fission. Loss-of-function leads to apoptosis (By similarity).</text>
</comment>
<comment type="subcellular location">
    <subcellularLocation>
        <location evidence="3">Mitochondrion inner membrane</location>
        <topology evidence="3">Multi-pass membrane protein</topology>
    </subcellularLocation>
</comment>
<comment type="similarity">
    <text evidence="3">Belongs to the MTFP1 family.</text>
</comment>
<proteinExistence type="evidence at transcript level"/>